<feature type="chain" id="PRO_1000019338" description="Ferrochelatase">
    <location>
        <begin position="1"/>
        <end position="391"/>
    </location>
</feature>
<feature type="binding site" evidence="1">
    <location>
        <position position="196"/>
    </location>
    <ligand>
        <name>Fe cation</name>
        <dbReference type="ChEBI" id="CHEBI:24875"/>
    </ligand>
</feature>
<feature type="binding site" evidence="1">
    <location>
        <position position="281"/>
    </location>
    <ligand>
        <name>Fe cation</name>
        <dbReference type="ChEBI" id="CHEBI:24875"/>
    </ligand>
</feature>
<keyword id="KW-0963">Cytoplasm</keyword>
<keyword id="KW-0350">Heme biosynthesis</keyword>
<keyword id="KW-0408">Iron</keyword>
<keyword id="KW-0456">Lyase</keyword>
<keyword id="KW-0479">Metal-binding</keyword>
<keyword id="KW-0627">Porphyrin biosynthesis</keyword>
<sequence length="391" mass="44109">MEKIGVLLMNLGGPERITDVGPFLYNLFSDPEIIRLPVPAFQKPLAWLISTLRSTTSQQAYLSIGGGSPIRRITEQQARELQSKLRDKGLNVTTYIAMRYWHPFTESAIADMKADGIDQIVVLPLYPHFSISTSGSSFRELKKLRDSDSDFKKIPMRCVRSWFSQSGYLKSMVELISEQISLCESPADAHIFFTAHGVPKSYVEEAGDPYKEQIEDCSLLIINELEKYLGHSNSYTLSYQSRVGPVEWLKPYTEEVLTDLGKAKVNDLIVVPISFVGEHIETLQEIDIEYKEIAEKAGIVNFRRVKALNTHPTFIEGLSDLVVSSLNGPVVNIEKASELPEKVKLYPQEKWQWGWNNSSEVWNGRVAMIVFLILFIELISGSGPLHKLGIL</sequence>
<reference key="1">
    <citation type="journal article" date="2007" name="PLoS Genet.">
        <title>Patterns and implications of gene gain and loss in the evolution of Prochlorococcus.</title>
        <authorList>
            <person name="Kettler G.C."/>
            <person name="Martiny A.C."/>
            <person name="Huang K."/>
            <person name="Zucker J."/>
            <person name="Coleman M.L."/>
            <person name="Rodrigue S."/>
            <person name="Chen F."/>
            <person name="Lapidus A."/>
            <person name="Ferriera S."/>
            <person name="Johnson J."/>
            <person name="Steglich C."/>
            <person name="Church G.M."/>
            <person name="Richardson P."/>
            <person name="Chisholm S.W."/>
        </authorList>
    </citation>
    <scope>NUCLEOTIDE SEQUENCE [LARGE SCALE GENOMIC DNA]</scope>
    <source>
        <strain>MIT 9515</strain>
    </source>
</reference>
<evidence type="ECO:0000255" key="1">
    <source>
        <dbReference type="HAMAP-Rule" id="MF_00323"/>
    </source>
</evidence>
<protein>
    <recommendedName>
        <fullName evidence="1">Ferrochelatase</fullName>
        <ecNumber evidence="1">4.98.1.1</ecNumber>
    </recommendedName>
    <alternativeName>
        <fullName evidence="1">Heme synthase</fullName>
    </alternativeName>
    <alternativeName>
        <fullName evidence="1">Protoheme ferro-lyase</fullName>
    </alternativeName>
</protein>
<name>HEMH_PROM5</name>
<proteinExistence type="inferred from homology"/>
<accession>A2BVI7</accession>
<comment type="function">
    <text evidence="1">Catalyzes the ferrous insertion into protoporphyrin IX.</text>
</comment>
<comment type="catalytic activity">
    <reaction evidence="1">
        <text>heme b + 2 H(+) = protoporphyrin IX + Fe(2+)</text>
        <dbReference type="Rhea" id="RHEA:22584"/>
        <dbReference type="ChEBI" id="CHEBI:15378"/>
        <dbReference type="ChEBI" id="CHEBI:29033"/>
        <dbReference type="ChEBI" id="CHEBI:57306"/>
        <dbReference type="ChEBI" id="CHEBI:60344"/>
        <dbReference type="EC" id="4.98.1.1"/>
    </reaction>
</comment>
<comment type="pathway">
    <text evidence="1">Porphyrin-containing compound metabolism; protoheme biosynthesis; protoheme from protoporphyrin-IX: step 1/1.</text>
</comment>
<comment type="subcellular location">
    <subcellularLocation>
        <location evidence="1">Cytoplasm</location>
    </subcellularLocation>
</comment>
<comment type="similarity">
    <text evidence="1">Belongs to the ferrochelatase family.</text>
</comment>
<dbReference type="EC" id="4.98.1.1" evidence="1"/>
<dbReference type="EMBL" id="CP000552">
    <property type="protein sequence ID" value="ABM71798.1"/>
    <property type="molecule type" value="Genomic_DNA"/>
</dbReference>
<dbReference type="RefSeq" id="WP_011819905.1">
    <property type="nucleotide sequence ID" value="NC_008817.1"/>
</dbReference>
<dbReference type="SMR" id="A2BVI7"/>
<dbReference type="STRING" id="167542.P9515_05891"/>
<dbReference type="GeneID" id="60200910"/>
<dbReference type="KEGG" id="pmc:P9515_05891"/>
<dbReference type="eggNOG" id="COG0276">
    <property type="taxonomic scope" value="Bacteria"/>
</dbReference>
<dbReference type="HOGENOM" id="CLU_018884_4_3_3"/>
<dbReference type="OrthoDB" id="9809741at2"/>
<dbReference type="UniPathway" id="UPA00252">
    <property type="reaction ID" value="UER00325"/>
</dbReference>
<dbReference type="Proteomes" id="UP000001589">
    <property type="component" value="Chromosome"/>
</dbReference>
<dbReference type="GO" id="GO:0005737">
    <property type="term" value="C:cytoplasm"/>
    <property type="evidence" value="ECO:0007669"/>
    <property type="project" value="UniProtKB-SubCell"/>
</dbReference>
<dbReference type="GO" id="GO:0004325">
    <property type="term" value="F:ferrochelatase activity"/>
    <property type="evidence" value="ECO:0007669"/>
    <property type="project" value="UniProtKB-UniRule"/>
</dbReference>
<dbReference type="GO" id="GO:0046872">
    <property type="term" value="F:metal ion binding"/>
    <property type="evidence" value="ECO:0007669"/>
    <property type="project" value="UniProtKB-KW"/>
</dbReference>
<dbReference type="GO" id="GO:0006783">
    <property type="term" value="P:heme biosynthetic process"/>
    <property type="evidence" value="ECO:0007669"/>
    <property type="project" value="UniProtKB-UniRule"/>
</dbReference>
<dbReference type="CDD" id="cd00419">
    <property type="entry name" value="Ferrochelatase_C"/>
    <property type="match status" value="1"/>
</dbReference>
<dbReference type="CDD" id="cd03411">
    <property type="entry name" value="Ferrochelatase_N"/>
    <property type="match status" value="1"/>
</dbReference>
<dbReference type="FunFam" id="3.40.50.1400:FF:000006">
    <property type="entry name" value="Ferrochelatase"/>
    <property type="match status" value="1"/>
</dbReference>
<dbReference type="Gene3D" id="3.40.50.1400">
    <property type="match status" value="2"/>
</dbReference>
<dbReference type="HAMAP" id="MF_00323">
    <property type="entry name" value="Ferrochelatase"/>
    <property type="match status" value="1"/>
</dbReference>
<dbReference type="InterPro" id="IPR001015">
    <property type="entry name" value="Ferrochelatase"/>
</dbReference>
<dbReference type="InterPro" id="IPR019772">
    <property type="entry name" value="Ferrochelatase_AS"/>
</dbReference>
<dbReference type="InterPro" id="IPR033644">
    <property type="entry name" value="Ferrochelatase_C"/>
</dbReference>
<dbReference type="InterPro" id="IPR033659">
    <property type="entry name" value="Ferrochelatase_N"/>
</dbReference>
<dbReference type="NCBIfam" id="TIGR00109">
    <property type="entry name" value="hemH"/>
    <property type="match status" value="1"/>
</dbReference>
<dbReference type="PANTHER" id="PTHR11108">
    <property type="entry name" value="FERROCHELATASE"/>
    <property type="match status" value="1"/>
</dbReference>
<dbReference type="PANTHER" id="PTHR11108:SF1">
    <property type="entry name" value="FERROCHELATASE, MITOCHONDRIAL"/>
    <property type="match status" value="1"/>
</dbReference>
<dbReference type="Pfam" id="PF00762">
    <property type="entry name" value="Ferrochelatase"/>
    <property type="match status" value="1"/>
</dbReference>
<dbReference type="SUPFAM" id="SSF53800">
    <property type="entry name" value="Chelatase"/>
    <property type="match status" value="1"/>
</dbReference>
<dbReference type="SUPFAM" id="SSF103511">
    <property type="entry name" value="Chlorophyll a-b binding protein"/>
    <property type="match status" value="1"/>
</dbReference>
<dbReference type="PROSITE" id="PS00534">
    <property type="entry name" value="FERROCHELATASE"/>
    <property type="match status" value="1"/>
</dbReference>
<organism>
    <name type="scientific">Prochlorococcus marinus (strain MIT 9515)</name>
    <dbReference type="NCBI Taxonomy" id="167542"/>
    <lineage>
        <taxon>Bacteria</taxon>
        <taxon>Bacillati</taxon>
        <taxon>Cyanobacteriota</taxon>
        <taxon>Cyanophyceae</taxon>
        <taxon>Synechococcales</taxon>
        <taxon>Prochlorococcaceae</taxon>
        <taxon>Prochlorococcus</taxon>
    </lineage>
</organism>
<gene>
    <name evidence="1" type="primary">hemH</name>
    <name type="ordered locus">P9515_05891</name>
</gene>